<proteinExistence type="inferred from homology"/>
<sequence>MRKSFYSWLMTQRNPKSNEPVAILADLVFDDTTFPKHTNDFELISRYLEDQASFSFNLGQFDEIWEDYLAH</sequence>
<feature type="chain" id="PRO_0000411647" description="UPF0346 protein SPs1527">
    <location>
        <begin position="1"/>
        <end position="71"/>
    </location>
</feature>
<organism>
    <name type="scientific">Streptococcus pyogenes serotype M3 (strain SSI-1)</name>
    <dbReference type="NCBI Taxonomy" id="193567"/>
    <lineage>
        <taxon>Bacteria</taxon>
        <taxon>Bacillati</taxon>
        <taxon>Bacillota</taxon>
        <taxon>Bacilli</taxon>
        <taxon>Lactobacillales</taxon>
        <taxon>Streptococcaceae</taxon>
        <taxon>Streptococcus</taxon>
    </lineage>
</organism>
<evidence type="ECO:0000255" key="1">
    <source>
        <dbReference type="HAMAP-Rule" id="MF_01538"/>
    </source>
</evidence>
<evidence type="ECO:0000305" key="2"/>
<gene>
    <name type="ordered locus">SPs1527</name>
</gene>
<protein>
    <recommendedName>
        <fullName evidence="1">UPF0346 protein SPs1527</fullName>
    </recommendedName>
</protein>
<accession>P0DH15</accession>
<accession>Q7CFE3</accession>
<accession>Q878D2</accession>
<comment type="similarity">
    <text evidence="1">Belongs to the UPF0346 family.</text>
</comment>
<comment type="sequence caution" evidence="2">
    <conflict type="erroneous initiation">
        <sequence resource="EMBL-CDS" id="BAC64622"/>
    </conflict>
</comment>
<dbReference type="EMBL" id="BA000034">
    <property type="protein sequence ID" value="BAC64622.1"/>
    <property type="status" value="ALT_INIT"/>
    <property type="molecule type" value="Genomic_DNA"/>
</dbReference>
<dbReference type="RefSeq" id="WP_002985757.1">
    <property type="nucleotide sequence ID" value="NC_004606.1"/>
</dbReference>
<dbReference type="SMR" id="P0DH15"/>
<dbReference type="KEGG" id="sps:SPs1527"/>
<dbReference type="HOGENOM" id="CLU_177534_1_0_9"/>
<dbReference type="Gene3D" id="1.10.150.260">
    <property type="entry name" value="YozE SAM-like"/>
    <property type="match status" value="1"/>
</dbReference>
<dbReference type="HAMAP" id="MF_01538">
    <property type="entry name" value="UPF0346"/>
    <property type="match status" value="1"/>
</dbReference>
<dbReference type="InterPro" id="IPR010673">
    <property type="entry name" value="UPF0346"/>
</dbReference>
<dbReference type="InterPro" id="IPR023089">
    <property type="entry name" value="YozE_SAM-like"/>
</dbReference>
<dbReference type="InterPro" id="IPR036806">
    <property type="entry name" value="YozE_SAM-like_sf"/>
</dbReference>
<dbReference type="NCBIfam" id="NF010193">
    <property type="entry name" value="PRK13672.1"/>
    <property type="match status" value="1"/>
</dbReference>
<dbReference type="Pfam" id="PF06855">
    <property type="entry name" value="YozE_SAM_like"/>
    <property type="match status" value="1"/>
</dbReference>
<dbReference type="PIRSF" id="PIRSF037262">
    <property type="entry name" value="UCP037262"/>
    <property type="match status" value="1"/>
</dbReference>
<dbReference type="SUPFAM" id="SSF140652">
    <property type="entry name" value="YozE-like"/>
    <property type="match status" value="1"/>
</dbReference>
<name>Y330_STRPQ</name>
<reference key="1">
    <citation type="journal article" date="2003" name="Genome Res.">
        <title>Genome sequence of an M3 strain of Streptococcus pyogenes reveals a large-scale genomic rearrangement in invasive strains and new insights into phage evolution.</title>
        <authorList>
            <person name="Nakagawa I."/>
            <person name="Kurokawa K."/>
            <person name="Yamashita A."/>
            <person name="Nakata M."/>
            <person name="Tomiyasu Y."/>
            <person name="Okahashi N."/>
            <person name="Kawabata S."/>
            <person name="Yamazaki K."/>
            <person name="Shiba T."/>
            <person name="Yasunaga T."/>
            <person name="Hayashi H."/>
            <person name="Hattori M."/>
            <person name="Hamada S."/>
        </authorList>
    </citation>
    <scope>NUCLEOTIDE SEQUENCE [LARGE SCALE GENOMIC DNA]</scope>
    <source>
        <strain>SSI-1</strain>
    </source>
</reference>